<name>Y3520_METJA</name>
<reference key="1">
    <citation type="journal article" date="1996" name="Science">
        <title>Complete genome sequence of the methanogenic archaeon, Methanococcus jannaschii.</title>
        <authorList>
            <person name="Bult C.J."/>
            <person name="White O."/>
            <person name="Olsen G.J."/>
            <person name="Zhou L."/>
            <person name="Fleischmann R.D."/>
            <person name="Sutton G.G."/>
            <person name="Blake J.A."/>
            <person name="FitzGerald L.M."/>
            <person name="Clayton R.A."/>
            <person name="Gocayne J.D."/>
            <person name="Kerlavage A.R."/>
            <person name="Dougherty B.A."/>
            <person name="Tomb J.-F."/>
            <person name="Adams M.D."/>
            <person name="Reich C.I."/>
            <person name="Overbeek R."/>
            <person name="Kirkness E.F."/>
            <person name="Weinstock K.G."/>
            <person name="Merrick J.M."/>
            <person name="Glodek A."/>
            <person name="Scott J.L."/>
            <person name="Geoghagen N.S.M."/>
            <person name="Weidman J.F."/>
            <person name="Fuhrmann J.L."/>
            <person name="Nguyen D."/>
            <person name="Utterback T.R."/>
            <person name="Kelley J.M."/>
            <person name="Peterson J.D."/>
            <person name="Sadow P.W."/>
            <person name="Hanna M.C."/>
            <person name="Cotton M.D."/>
            <person name="Roberts K.M."/>
            <person name="Hurst M.A."/>
            <person name="Kaine B.P."/>
            <person name="Borodovsky M."/>
            <person name="Klenk H.-P."/>
            <person name="Fraser C.M."/>
            <person name="Smith H.O."/>
            <person name="Woese C.R."/>
            <person name="Venter J.C."/>
        </authorList>
    </citation>
    <scope>NUCLEOTIDE SEQUENCE [LARGE SCALE GENOMIC DNA]</scope>
    <source>
        <strain>ATCC 43067 / DSM 2661 / JAL-1 / JCM 10045 / NBRC 100440</strain>
    </source>
</reference>
<proteinExistence type="predicted"/>
<evidence type="ECO:0000305" key="1"/>
<comment type="similarity">
    <text evidence="1">To M.jannaschii MJ0215.</text>
</comment>
<dbReference type="EMBL" id="L77118">
    <property type="protein sequence ID" value="AAC37091.1"/>
    <property type="molecule type" value="Genomic_DNA"/>
</dbReference>
<dbReference type="PIR" id="C64512">
    <property type="entry name" value="C64512"/>
</dbReference>
<dbReference type="RefSeq" id="WP_010890067.1">
    <property type="nucleotide sequence ID" value="NC_001732.1"/>
</dbReference>
<dbReference type="SMR" id="Q60280"/>
<dbReference type="PaxDb" id="243232-MJ_ECL20"/>
<dbReference type="EnsemblBacteria" id="AAC37091">
    <property type="protein sequence ID" value="AAC37091"/>
    <property type="gene ID" value="MJ_ECL20"/>
</dbReference>
<dbReference type="GeneID" id="1450804"/>
<dbReference type="KEGG" id="mja:MJ_ECL20"/>
<dbReference type="eggNOG" id="arCOG03413">
    <property type="taxonomic scope" value="Archaea"/>
</dbReference>
<dbReference type="HOGENOM" id="CLU_1700308_0_0_2"/>
<dbReference type="InParanoid" id="Q60280"/>
<dbReference type="OrthoDB" id="117569at2157"/>
<dbReference type="PhylomeDB" id="Q60280"/>
<dbReference type="Proteomes" id="UP000000805">
    <property type="component" value="Plasmid pDSM2661_1"/>
</dbReference>
<dbReference type="GO" id="GO:0005737">
    <property type="term" value="C:cytoplasm"/>
    <property type="evidence" value="ECO:0000318"/>
    <property type="project" value="GO_Central"/>
</dbReference>
<dbReference type="GO" id="GO:0004725">
    <property type="term" value="F:protein tyrosine phosphatase activity"/>
    <property type="evidence" value="ECO:0000318"/>
    <property type="project" value="GO_Central"/>
</dbReference>
<dbReference type="Gene3D" id="3.90.190.10">
    <property type="entry name" value="Protein tyrosine phosphatase superfamily"/>
    <property type="match status" value="1"/>
</dbReference>
<dbReference type="InterPro" id="IPR029021">
    <property type="entry name" value="Prot-tyrosine_phosphatase-like"/>
</dbReference>
<dbReference type="InterPro" id="IPR050561">
    <property type="entry name" value="PTP"/>
</dbReference>
<dbReference type="InterPro" id="IPR000387">
    <property type="entry name" value="Tyr_Pase_dom"/>
</dbReference>
<dbReference type="PANTHER" id="PTHR23339">
    <property type="entry name" value="TYROSINE SPECIFIC PROTEIN PHOSPHATASE AND DUAL SPECIFICITY PROTEIN PHOSPHATASE"/>
    <property type="match status" value="1"/>
</dbReference>
<dbReference type="Pfam" id="PF22785">
    <property type="entry name" value="Tc-R-P"/>
    <property type="match status" value="1"/>
</dbReference>
<dbReference type="SUPFAM" id="SSF52799">
    <property type="entry name" value="(Phosphotyrosine protein) phosphatases II"/>
    <property type="match status" value="1"/>
</dbReference>
<gene>
    <name type="ordered locus">MJECL20</name>
</gene>
<protein>
    <recommendedName>
        <fullName>Uncharacterized protein MJECL20</fullName>
    </recommendedName>
</protein>
<sequence length="147" mass="16976">MGKCRHNGEVSIFGVRPASFPYFPFNLMDRIGGFVILDELWLRRWCEIIEYPMKIPTLYVPIEDYGIPTVEDMDLIVDFIKYHVSNGREVVVSCIGGHGRTGTVLAIWAGLNGVENPIEYVRECYCECAVETEEQEEFVMEYLKKRL</sequence>
<accession>Q60280</accession>
<feature type="chain" id="PRO_0000107508" description="Uncharacterized protein MJECL20">
    <location>
        <begin position="1"/>
        <end position="147"/>
    </location>
</feature>
<organism>
    <name type="scientific">Methanocaldococcus jannaschii (strain ATCC 43067 / DSM 2661 / JAL-1 / JCM 10045 / NBRC 100440)</name>
    <name type="common">Methanococcus jannaschii</name>
    <dbReference type="NCBI Taxonomy" id="243232"/>
    <lineage>
        <taxon>Archaea</taxon>
        <taxon>Methanobacteriati</taxon>
        <taxon>Methanobacteriota</taxon>
        <taxon>Methanomada group</taxon>
        <taxon>Methanococci</taxon>
        <taxon>Methanococcales</taxon>
        <taxon>Methanocaldococcaceae</taxon>
        <taxon>Methanocaldococcus</taxon>
    </lineage>
</organism>
<keyword id="KW-0614">Plasmid</keyword>
<keyword id="KW-1185">Reference proteome</keyword>
<geneLocation type="plasmid">
    <name>large ECE</name>
</geneLocation>